<protein>
    <recommendedName>
        <fullName>Trp operon repressor homolog</fullName>
    </recommendedName>
</protein>
<sequence length="103" mass="11538">MVQQPSFSEWQQVLDLVKQAVQQEQHEMLLTMLMTPDEREALVARVNIVHELLQGELSQRQISQMLGVGIATITRGSNELKSRSEDEKAALAQLLMPPPSSEA</sequence>
<accession>Q9KU28</accession>
<organism>
    <name type="scientific">Vibrio cholerae serotype O1 (strain ATCC 39315 / El Tor Inaba N16961)</name>
    <dbReference type="NCBI Taxonomy" id="243277"/>
    <lineage>
        <taxon>Bacteria</taxon>
        <taxon>Pseudomonadati</taxon>
        <taxon>Pseudomonadota</taxon>
        <taxon>Gammaproteobacteria</taxon>
        <taxon>Vibrionales</taxon>
        <taxon>Vibrionaceae</taxon>
        <taxon>Vibrio</taxon>
    </lineage>
</organism>
<reference key="1">
    <citation type="journal article" date="2000" name="Nature">
        <title>DNA sequence of both chromosomes of the cholera pathogen Vibrio cholerae.</title>
        <authorList>
            <person name="Heidelberg J.F."/>
            <person name="Eisen J.A."/>
            <person name="Nelson W.C."/>
            <person name="Clayton R.A."/>
            <person name="Gwinn M.L."/>
            <person name="Dodson R.J."/>
            <person name="Haft D.H."/>
            <person name="Hickey E.K."/>
            <person name="Peterson J.D."/>
            <person name="Umayam L.A."/>
            <person name="Gill S.R."/>
            <person name="Nelson K.E."/>
            <person name="Read T.D."/>
            <person name="Tettelin H."/>
            <person name="Richardson D.L."/>
            <person name="Ermolaeva M.D."/>
            <person name="Vamathevan J.J."/>
            <person name="Bass S."/>
            <person name="Qin H."/>
            <person name="Dragoi I."/>
            <person name="Sellers P."/>
            <person name="McDonald L.A."/>
            <person name="Utterback T.R."/>
            <person name="Fleischmann R.D."/>
            <person name="Nierman W.C."/>
            <person name="White O."/>
            <person name="Salzberg S.L."/>
            <person name="Smith H.O."/>
            <person name="Colwell R.R."/>
            <person name="Mekalanos J.J."/>
            <person name="Venter J.C."/>
            <person name="Fraser C.M."/>
        </authorList>
    </citation>
    <scope>NUCLEOTIDE SEQUENCE [LARGE SCALE GENOMIC DNA]</scope>
    <source>
        <strain>ATCC 39315 / El Tor Inaba N16961</strain>
    </source>
</reference>
<dbReference type="EMBL" id="AE003852">
    <property type="protein sequence ID" value="AAF93866.1"/>
    <property type="status" value="ALT_INIT"/>
    <property type="molecule type" value="Genomic_DNA"/>
</dbReference>
<dbReference type="PIR" id="G82290">
    <property type="entry name" value="G82290"/>
</dbReference>
<dbReference type="RefSeq" id="NP_230350.1">
    <property type="nucleotide sequence ID" value="NC_002505.1"/>
</dbReference>
<dbReference type="RefSeq" id="WP_000250616.1">
    <property type="nucleotide sequence ID" value="NZ_LT906614.1"/>
</dbReference>
<dbReference type="SMR" id="Q9KU28"/>
<dbReference type="STRING" id="243277.VC_0701"/>
<dbReference type="DNASU" id="2615490"/>
<dbReference type="EnsemblBacteria" id="AAF93866">
    <property type="protein sequence ID" value="AAF93866"/>
    <property type="gene ID" value="VC_0701"/>
</dbReference>
<dbReference type="KEGG" id="vch:VC_0701"/>
<dbReference type="PATRIC" id="fig|243277.26.peg.671"/>
<dbReference type="eggNOG" id="COG2973">
    <property type="taxonomic scope" value="Bacteria"/>
</dbReference>
<dbReference type="HOGENOM" id="CLU_147939_0_0_6"/>
<dbReference type="Proteomes" id="UP000000584">
    <property type="component" value="Chromosome 1"/>
</dbReference>
<dbReference type="GO" id="GO:0005737">
    <property type="term" value="C:cytoplasm"/>
    <property type="evidence" value="ECO:0007669"/>
    <property type="project" value="UniProtKB-SubCell"/>
</dbReference>
<dbReference type="GO" id="GO:0003700">
    <property type="term" value="F:DNA-binding transcription factor activity"/>
    <property type="evidence" value="ECO:0007669"/>
    <property type="project" value="InterPro"/>
</dbReference>
<dbReference type="GO" id="GO:0043565">
    <property type="term" value="F:sequence-specific DNA binding"/>
    <property type="evidence" value="ECO:0000318"/>
    <property type="project" value="GO_Central"/>
</dbReference>
<dbReference type="GO" id="GO:0045892">
    <property type="term" value="P:negative regulation of DNA-templated transcription"/>
    <property type="evidence" value="ECO:0007669"/>
    <property type="project" value="UniProtKB-UniRule"/>
</dbReference>
<dbReference type="GO" id="GO:0006355">
    <property type="term" value="P:regulation of DNA-templated transcription"/>
    <property type="evidence" value="ECO:0000318"/>
    <property type="project" value="GO_Central"/>
</dbReference>
<dbReference type="FunFam" id="1.10.1270.10:FF:000001">
    <property type="entry name" value="Trp operon repressor"/>
    <property type="match status" value="1"/>
</dbReference>
<dbReference type="Gene3D" id="1.10.1270.10">
    <property type="entry name" value="TrpR-like"/>
    <property type="match status" value="1"/>
</dbReference>
<dbReference type="HAMAP" id="MF_00475">
    <property type="entry name" value="Trp_repressor"/>
    <property type="match status" value="1"/>
</dbReference>
<dbReference type="InterPro" id="IPR000831">
    <property type="entry name" value="Trp_repress"/>
</dbReference>
<dbReference type="InterPro" id="IPR013335">
    <property type="entry name" value="Trp_repress_bac"/>
</dbReference>
<dbReference type="InterPro" id="IPR010921">
    <property type="entry name" value="Trp_repressor/repl_initiator"/>
</dbReference>
<dbReference type="InterPro" id="IPR038116">
    <property type="entry name" value="TrpR-like_sf"/>
</dbReference>
<dbReference type="NCBIfam" id="TIGR01321">
    <property type="entry name" value="TrpR"/>
    <property type="match status" value="1"/>
</dbReference>
<dbReference type="PANTHER" id="PTHR38025">
    <property type="entry name" value="TRP OPERON REPRESSOR"/>
    <property type="match status" value="1"/>
</dbReference>
<dbReference type="PANTHER" id="PTHR38025:SF1">
    <property type="entry name" value="TRP OPERON REPRESSOR"/>
    <property type="match status" value="1"/>
</dbReference>
<dbReference type="Pfam" id="PF01371">
    <property type="entry name" value="Trp_repressor"/>
    <property type="match status" value="1"/>
</dbReference>
<dbReference type="PIRSF" id="PIRSF003196">
    <property type="entry name" value="Trp_repressor"/>
    <property type="match status" value="1"/>
</dbReference>
<dbReference type="SUPFAM" id="SSF48295">
    <property type="entry name" value="TrpR-like"/>
    <property type="match status" value="1"/>
</dbReference>
<feature type="chain" id="PRO_0000196513" description="Trp operon repressor homolog">
    <location>
        <begin position="1"/>
        <end position="103"/>
    </location>
</feature>
<feature type="DNA-binding region" evidence="1">
    <location>
        <begin position="59"/>
        <end position="82"/>
    </location>
</feature>
<feature type="region of interest" description="Disordered" evidence="2">
    <location>
        <begin position="79"/>
        <end position="103"/>
    </location>
</feature>
<feature type="compositionally biased region" description="Basic and acidic residues" evidence="2">
    <location>
        <begin position="79"/>
        <end position="89"/>
    </location>
</feature>
<keyword id="KW-0963">Cytoplasm</keyword>
<keyword id="KW-0238">DNA-binding</keyword>
<keyword id="KW-1185">Reference proteome</keyword>
<keyword id="KW-0678">Repressor</keyword>
<keyword id="KW-0804">Transcription</keyword>
<keyword id="KW-0805">Transcription regulation</keyword>
<comment type="function">
    <text evidence="1">This protein is an aporepressor. When complexed with L-tryptophan it binds the operator region of the trp operon and prevents the initiation of transcription (By similarity).</text>
</comment>
<comment type="subunit">
    <text evidence="1">Homodimer.</text>
</comment>
<comment type="subcellular location">
    <subcellularLocation>
        <location evidence="1">Cytoplasm</location>
    </subcellularLocation>
</comment>
<comment type="similarity">
    <text evidence="3">Belongs to the TrpR family.</text>
</comment>
<comment type="sequence caution" evidence="3">
    <conflict type="erroneous initiation">
        <sequence resource="EMBL-CDS" id="AAF93866"/>
    </conflict>
</comment>
<gene>
    <name type="primary">trpR</name>
    <name type="ordered locus">VC_0701</name>
</gene>
<name>TRPR_VIBCH</name>
<proteinExistence type="inferred from homology"/>
<evidence type="ECO:0000250" key="1"/>
<evidence type="ECO:0000256" key="2">
    <source>
        <dbReference type="SAM" id="MobiDB-lite"/>
    </source>
</evidence>
<evidence type="ECO:0000305" key="3"/>